<gene>
    <name evidence="4" type="primary">iliC</name>
    <name type="ORF">TRIREDRAFT_58953</name>
</gene>
<keyword id="KW-0349">Heme</keyword>
<keyword id="KW-0408">Iron</keyword>
<keyword id="KW-0472">Membrane</keyword>
<keyword id="KW-0479">Metal-binding</keyword>
<keyword id="KW-0503">Monooxygenase</keyword>
<keyword id="KW-0560">Oxidoreductase</keyword>
<keyword id="KW-1185">Reference proteome</keyword>
<keyword id="KW-0812">Transmembrane</keyword>
<keyword id="KW-1133">Transmembrane helix</keyword>
<protein>
    <recommendedName>
        <fullName evidence="4">Cytochrome P450 monooxygenase iliC</fullName>
        <ecNumber evidence="3">1.-.-.-</ecNumber>
    </recommendedName>
    <alternativeName>
        <fullName evidence="4">Ilicicolin H biosynthesis cluster protein C</fullName>
    </alternativeName>
</protein>
<proteinExistence type="evidence at protein level"/>
<evidence type="ECO:0000250" key="1">
    <source>
        <dbReference type="UniProtKB" id="P04798"/>
    </source>
</evidence>
<evidence type="ECO:0000255" key="2"/>
<evidence type="ECO:0000269" key="3">
    <source>
    </source>
</evidence>
<evidence type="ECO:0000303" key="4">
    <source>
    </source>
</evidence>
<evidence type="ECO:0000305" key="5"/>
<evidence type="ECO:0000305" key="6">
    <source>
    </source>
</evidence>
<feature type="chain" id="PRO_0000455713" description="Cytochrome P450 monooxygenase iliC">
    <location>
        <begin position="1"/>
        <end position="449"/>
    </location>
</feature>
<feature type="transmembrane region" description="Helical" evidence="2">
    <location>
        <begin position="28"/>
        <end position="44"/>
    </location>
</feature>
<feature type="binding site" description="axial binding residue" evidence="1">
    <location>
        <position position="397"/>
    </location>
    <ligand>
        <name>heme</name>
        <dbReference type="ChEBI" id="CHEBI:30413"/>
    </ligand>
    <ligandPart>
        <name>Fe</name>
        <dbReference type="ChEBI" id="CHEBI:18248"/>
    </ligandPart>
</feature>
<name>ILIC_HYPJQ</name>
<reference key="1">
    <citation type="journal article" date="2008" name="Nat. Biotechnol.">
        <title>Genome sequencing and analysis of the biomass-degrading fungus Trichoderma reesei (syn. Hypocrea jecorina).</title>
        <authorList>
            <person name="Martinez D."/>
            <person name="Berka R.M."/>
            <person name="Henrissat B."/>
            <person name="Saloheimo M."/>
            <person name="Arvas M."/>
            <person name="Baker S.E."/>
            <person name="Chapman J."/>
            <person name="Chertkov O."/>
            <person name="Coutinho P.M."/>
            <person name="Cullen D."/>
            <person name="Danchin E.G."/>
            <person name="Grigoriev I.V."/>
            <person name="Harris P."/>
            <person name="Jackson M."/>
            <person name="Kubicek C.P."/>
            <person name="Han C.S."/>
            <person name="Ho I."/>
            <person name="Larrondo L.F."/>
            <person name="de Leon A.L."/>
            <person name="Magnuson J.K."/>
            <person name="Merino S."/>
            <person name="Misra M."/>
            <person name="Nelson B."/>
            <person name="Putnam N."/>
            <person name="Robbertse B."/>
            <person name="Salamov A.A."/>
            <person name="Schmoll M."/>
            <person name="Terry A."/>
            <person name="Thayer N."/>
            <person name="Westerholm-Parvinen A."/>
            <person name="Schoch C.L."/>
            <person name="Yao J."/>
            <person name="Barabote R."/>
            <person name="Nelson M.A."/>
            <person name="Detter C."/>
            <person name="Bruce D."/>
            <person name="Kuske C.R."/>
            <person name="Xie G."/>
            <person name="Richardson P."/>
            <person name="Rokhsar D.S."/>
            <person name="Lucas S.M."/>
            <person name="Rubin E.M."/>
            <person name="Dunn-Coleman N."/>
            <person name="Ward M."/>
            <person name="Brettin T.S."/>
        </authorList>
    </citation>
    <scope>NUCLEOTIDE SEQUENCE [LARGE SCALE GENOMIC DNA]</scope>
    <source>
        <strain>QM6a</strain>
    </source>
</reference>
<reference key="2">
    <citation type="journal article" date="2021" name="J. Fungi">
        <title>Trichoderma reesei Contains a Biosynthetic Gene Cluster That Encodes the Antifungal Agent Ilicicolin H.</title>
        <authorList>
            <person name="Shenouda M.L."/>
            <person name="Ambilika M."/>
            <person name="Cox R.J."/>
        </authorList>
    </citation>
    <scope>FUNCTION</scope>
    <scope>CATALYTIC ACTIVITY</scope>
    <scope>PATHWAY</scope>
</reference>
<accession>G0REX9</accession>
<comment type="function">
    <text evidence="3 6">Cytochrome P450 monooxygenase; part of the gene cluster that mediates the biosynthesis of ilicicolin H, a 4-hydroxy-2-pyridonealkaloid that has potent and broad antifungal activities by inhibiting the mitochondrial respiration chain (PubMed:34947016). IliC catalyzes the ring expansion of the tetramate intermediate to the acyclic 2-pyridone intermediate that contains the trans bis-diene chain (PubMed:34947016). The biosynthesis of ilicicolin H starts with formation of the tetramic acid by the hybrid PKS-NRPS synthetase iliA with the partnering trans-enoyl reductase iliB since iliA lacks a designated enoylreductase (ER) domain. The cytochrome P450 monooxygenase iliC then catalyzes the ring expansion of the tetramate to the acyclic 2-pyridone. The pericyclase iliD further converts the acyclic 2-pyridone into 8-epi-ilicicolin H. 8-epi-ilicicolin H might then spontaneously convert to ilicicolin H since ilicicolin H is produced in the absence of the epimerase iliE, in contrast to what was observed for the Talaromyces variabilis ilicolin H biosynthetic pathway (Probable) (PubMed:34947016).</text>
</comment>
<comment type="catalytic activity">
    <reaction evidence="3">
        <text>(3E,5S)-3-[(2E,4E,8S,10E,12Z)-1-hydroxy-4,8-dimethyltetradeca-2,4,10,12-tetraen-1-ylidene]-5-[(4-hydroxyphenyl)methyl]pyrrolidine-2,4-dione + reduced [NADPH--hemoprotein reductase] + O2 = 3-[(2E,4E,8S,10E,12Z)-4,8-dimethyltetradeca-2,4,10,12-tetraenoyl]-4-hydroxy-5-(4-hydroxyphenyl)-1,2-dihydropyridin-2-one + oxidized [NADPH--hemoprotein reductase] + 2 H2O</text>
        <dbReference type="Rhea" id="RHEA:64552"/>
        <dbReference type="Rhea" id="RHEA-COMP:11964"/>
        <dbReference type="Rhea" id="RHEA-COMP:11965"/>
        <dbReference type="ChEBI" id="CHEBI:15377"/>
        <dbReference type="ChEBI" id="CHEBI:15379"/>
        <dbReference type="ChEBI" id="CHEBI:57618"/>
        <dbReference type="ChEBI" id="CHEBI:58210"/>
        <dbReference type="ChEBI" id="CHEBI:155889"/>
        <dbReference type="ChEBI" id="CHEBI:155890"/>
    </reaction>
    <physiologicalReaction direction="left-to-right" evidence="3">
        <dbReference type="Rhea" id="RHEA:64553"/>
    </physiologicalReaction>
</comment>
<comment type="cofactor">
    <cofactor evidence="1">
        <name>heme</name>
        <dbReference type="ChEBI" id="CHEBI:30413"/>
    </cofactor>
</comment>
<comment type="pathway">
    <text evidence="3">Mycotoxin biosynthesis.</text>
</comment>
<comment type="subcellular location">
    <subcellularLocation>
        <location evidence="2">Membrane</location>
        <topology evidence="2">Single-pass membrane protein</topology>
    </subcellularLocation>
</comment>
<comment type="similarity">
    <text evidence="5">Belongs to the cytochrome P450 family.</text>
</comment>
<dbReference type="EC" id="1.-.-.-" evidence="3"/>
<dbReference type="EMBL" id="GL985060">
    <property type="protein sequence ID" value="EGR50064.1"/>
    <property type="molecule type" value="Genomic_DNA"/>
</dbReference>
<dbReference type="RefSeq" id="XP_006963602.1">
    <property type="nucleotide sequence ID" value="XM_006963540.1"/>
</dbReference>
<dbReference type="SMR" id="G0REX9"/>
<dbReference type="STRING" id="431241.G0REX9"/>
<dbReference type="EnsemblFungi" id="EGR50064">
    <property type="protein sequence ID" value="EGR50064"/>
    <property type="gene ID" value="TRIREDRAFT_58953"/>
</dbReference>
<dbReference type="GeneID" id="18486391"/>
<dbReference type="KEGG" id="tre:TRIREDRAFT_58953"/>
<dbReference type="VEuPathDB" id="FungiDB:TRIREDRAFT_58953"/>
<dbReference type="eggNOG" id="KOG0158">
    <property type="taxonomic scope" value="Eukaryota"/>
</dbReference>
<dbReference type="HOGENOM" id="CLU_001570_27_0_1"/>
<dbReference type="OrthoDB" id="1470350at2759"/>
<dbReference type="Proteomes" id="UP000008984">
    <property type="component" value="Unassembled WGS sequence"/>
</dbReference>
<dbReference type="GO" id="GO:0016020">
    <property type="term" value="C:membrane"/>
    <property type="evidence" value="ECO:0007669"/>
    <property type="project" value="UniProtKB-SubCell"/>
</dbReference>
<dbReference type="GO" id="GO:0020037">
    <property type="term" value="F:heme binding"/>
    <property type="evidence" value="ECO:0007669"/>
    <property type="project" value="InterPro"/>
</dbReference>
<dbReference type="GO" id="GO:0005506">
    <property type="term" value="F:iron ion binding"/>
    <property type="evidence" value="ECO:0007669"/>
    <property type="project" value="InterPro"/>
</dbReference>
<dbReference type="GO" id="GO:0016712">
    <property type="term" value="F:oxidoreductase activity, acting on paired donors, with incorporation or reduction of molecular oxygen, reduced flavin or flavoprotein as one donor, and incorporation of one atom of oxygen"/>
    <property type="evidence" value="ECO:0007669"/>
    <property type="project" value="InterPro"/>
</dbReference>
<dbReference type="Gene3D" id="1.10.630.10">
    <property type="entry name" value="Cytochrome P450"/>
    <property type="match status" value="1"/>
</dbReference>
<dbReference type="InterPro" id="IPR001128">
    <property type="entry name" value="Cyt_P450"/>
</dbReference>
<dbReference type="InterPro" id="IPR017972">
    <property type="entry name" value="Cyt_P450_CS"/>
</dbReference>
<dbReference type="InterPro" id="IPR002974">
    <property type="entry name" value="Cyt_P450_E_CYP52_ascomycetes"/>
</dbReference>
<dbReference type="InterPro" id="IPR047146">
    <property type="entry name" value="Cyt_P450_E_CYP52_fungi"/>
</dbReference>
<dbReference type="InterPro" id="IPR036396">
    <property type="entry name" value="Cyt_P450_sf"/>
</dbReference>
<dbReference type="PANTHER" id="PTHR24287:SF18">
    <property type="entry name" value="CYTOCHROME P450 MONOOXYGENASE APDE-RELATED"/>
    <property type="match status" value="1"/>
</dbReference>
<dbReference type="PANTHER" id="PTHR24287">
    <property type="entry name" value="P450, PUTATIVE (EUROFUNG)-RELATED"/>
    <property type="match status" value="1"/>
</dbReference>
<dbReference type="Pfam" id="PF00067">
    <property type="entry name" value="p450"/>
    <property type="match status" value="1"/>
</dbReference>
<dbReference type="PRINTS" id="PR01239">
    <property type="entry name" value="EP450IICYP52"/>
</dbReference>
<dbReference type="SUPFAM" id="SSF48264">
    <property type="entry name" value="Cytochrome P450"/>
    <property type="match status" value="1"/>
</dbReference>
<dbReference type="PROSITE" id="PS00086">
    <property type="entry name" value="CYTOCHROME_P450"/>
    <property type="match status" value="1"/>
</dbReference>
<sequence>MVYSQLQALKRNYYLDWLRNLHKGKPKTFAITFMGVKQICTIEGENLKAIQATNFKDFGLEPMRRKTKGAMPFADKGISTTDGKNWEFARFLVKPFFYREVYASIDRVDPYVRKLFGLLPEEDGVTFDIQPLIQRWFLDLTSEFIFGKTMDSMTYPDRANITWTMLDVLRGGRLRIQMYKFLWAFNWNWWLKAVYEVHDFVNVHIRSTYKELAAREQRIRDGLPVGPERVDLLWYMATHVRDEEELRSQLCLVFVPNNDTTSIFISNCIWHLARDHEAWQKLRKEVLDYGDQPITFESLRSMPYLNGVLNETHRLTPNNIVQVRACLNDSVLPLGGGPDGKSPLYVNKGDLVSVTKTVMYRDPDIWGPDVDVFRPERFFGVRGNWNFLPFGGGPRRCPAQMMVQTESAYMLFQLAKRYSRLECRDPEPYTAVMRIGPSNINGVKIAFYK</sequence>
<organism>
    <name type="scientific">Hypocrea jecorina (strain QM6a)</name>
    <name type="common">Trichoderma reesei</name>
    <dbReference type="NCBI Taxonomy" id="431241"/>
    <lineage>
        <taxon>Eukaryota</taxon>
        <taxon>Fungi</taxon>
        <taxon>Dikarya</taxon>
        <taxon>Ascomycota</taxon>
        <taxon>Pezizomycotina</taxon>
        <taxon>Sordariomycetes</taxon>
        <taxon>Hypocreomycetidae</taxon>
        <taxon>Hypocreales</taxon>
        <taxon>Hypocreaceae</taxon>
        <taxon>Trichoderma</taxon>
    </lineage>
</organism>